<gene>
    <name evidence="1" type="primary">dnaJ</name>
    <name type="ordered locus">BLi02738</name>
    <name type="ordered locus">BL02098</name>
</gene>
<dbReference type="EMBL" id="AE017333">
    <property type="protein sequence ID" value="AAU41609.1"/>
    <property type="molecule type" value="Genomic_DNA"/>
</dbReference>
<dbReference type="EMBL" id="CP000002">
    <property type="protein sequence ID" value="AAU24247.1"/>
    <property type="molecule type" value="Genomic_DNA"/>
</dbReference>
<dbReference type="RefSeq" id="WP_003183667.1">
    <property type="nucleotide sequence ID" value="NC_006322.1"/>
</dbReference>
<dbReference type="SMR" id="Q65H55"/>
<dbReference type="STRING" id="279010.BL02098"/>
<dbReference type="GeneID" id="92860671"/>
<dbReference type="KEGG" id="bld:BLi02738"/>
<dbReference type="KEGG" id="bli:BL02098"/>
<dbReference type="eggNOG" id="COG0484">
    <property type="taxonomic scope" value="Bacteria"/>
</dbReference>
<dbReference type="HOGENOM" id="CLU_017633_0_7_9"/>
<dbReference type="Proteomes" id="UP000000606">
    <property type="component" value="Chromosome"/>
</dbReference>
<dbReference type="GO" id="GO:0005737">
    <property type="term" value="C:cytoplasm"/>
    <property type="evidence" value="ECO:0007669"/>
    <property type="project" value="UniProtKB-SubCell"/>
</dbReference>
<dbReference type="GO" id="GO:0005524">
    <property type="term" value="F:ATP binding"/>
    <property type="evidence" value="ECO:0007669"/>
    <property type="project" value="InterPro"/>
</dbReference>
<dbReference type="GO" id="GO:0031072">
    <property type="term" value="F:heat shock protein binding"/>
    <property type="evidence" value="ECO:0007669"/>
    <property type="project" value="InterPro"/>
</dbReference>
<dbReference type="GO" id="GO:0051082">
    <property type="term" value="F:unfolded protein binding"/>
    <property type="evidence" value="ECO:0007669"/>
    <property type="project" value="UniProtKB-UniRule"/>
</dbReference>
<dbReference type="GO" id="GO:0008270">
    <property type="term" value="F:zinc ion binding"/>
    <property type="evidence" value="ECO:0007669"/>
    <property type="project" value="UniProtKB-UniRule"/>
</dbReference>
<dbReference type="GO" id="GO:0051085">
    <property type="term" value="P:chaperone cofactor-dependent protein refolding"/>
    <property type="evidence" value="ECO:0007669"/>
    <property type="project" value="TreeGrafter"/>
</dbReference>
<dbReference type="GO" id="GO:0006260">
    <property type="term" value="P:DNA replication"/>
    <property type="evidence" value="ECO:0007669"/>
    <property type="project" value="UniProtKB-KW"/>
</dbReference>
<dbReference type="GO" id="GO:0042026">
    <property type="term" value="P:protein refolding"/>
    <property type="evidence" value="ECO:0007669"/>
    <property type="project" value="TreeGrafter"/>
</dbReference>
<dbReference type="GO" id="GO:0009408">
    <property type="term" value="P:response to heat"/>
    <property type="evidence" value="ECO:0007669"/>
    <property type="project" value="InterPro"/>
</dbReference>
<dbReference type="CDD" id="cd06257">
    <property type="entry name" value="DnaJ"/>
    <property type="match status" value="1"/>
</dbReference>
<dbReference type="CDD" id="cd10747">
    <property type="entry name" value="DnaJ_C"/>
    <property type="match status" value="1"/>
</dbReference>
<dbReference type="CDD" id="cd10719">
    <property type="entry name" value="DnaJ_zf"/>
    <property type="match status" value="1"/>
</dbReference>
<dbReference type="FunFam" id="1.10.287.110:FF:000031">
    <property type="entry name" value="Molecular chaperone DnaJ"/>
    <property type="match status" value="1"/>
</dbReference>
<dbReference type="FunFam" id="2.10.230.10:FF:000002">
    <property type="entry name" value="Molecular chaperone DnaJ"/>
    <property type="match status" value="1"/>
</dbReference>
<dbReference type="FunFam" id="2.60.260.20:FF:000004">
    <property type="entry name" value="Molecular chaperone DnaJ"/>
    <property type="match status" value="1"/>
</dbReference>
<dbReference type="FunFam" id="2.60.260.20:FF:000009">
    <property type="entry name" value="Putative Mitochondrial DnaJ chaperone"/>
    <property type="match status" value="1"/>
</dbReference>
<dbReference type="Gene3D" id="1.10.287.110">
    <property type="entry name" value="DnaJ domain"/>
    <property type="match status" value="1"/>
</dbReference>
<dbReference type="Gene3D" id="2.10.230.10">
    <property type="entry name" value="Heat shock protein DnaJ, cysteine-rich domain"/>
    <property type="match status" value="1"/>
</dbReference>
<dbReference type="Gene3D" id="2.60.260.20">
    <property type="entry name" value="Urease metallochaperone UreE, N-terminal domain"/>
    <property type="match status" value="2"/>
</dbReference>
<dbReference type="HAMAP" id="MF_01152">
    <property type="entry name" value="DnaJ"/>
    <property type="match status" value="1"/>
</dbReference>
<dbReference type="InterPro" id="IPR012724">
    <property type="entry name" value="DnaJ"/>
</dbReference>
<dbReference type="InterPro" id="IPR002939">
    <property type="entry name" value="DnaJ_C"/>
</dbReference>
<dbReference type="InterPro" id="IPR001623">
    <property type="entry name" value="DnaJ_domain"/>
</dbReference>
<dbReference type="InterPro" id="IPR018253">
    <property type="entry name" value="DnaJ_domain_CS"/>
</dbReference>
<dbReference type="InterPro" id="IPR008971">
    <property type="entry name" value="HSP40/DnaJ_pept-bd"/>
</dbReference>
<dbReference type="InterPro" id="IPR001305">
    <property type="entry name" value="HSP_DnaJ_Cys-rich_dom"/>
</dbReference>
<dbReference type="InterPro" id="IPR036410">
    <property type="entry name" value="HSP_DnaJ_Cys-rich_dom_sf"/>
</dbReference>
<dbReference type="InterPro" id="IPR036869">
    <property type="entry name" value="J_dom_sf"/>
</dbReference>
<dbReference type="NCBIfam" id="TIGR02349">
    <property type="entry name" value="DnaJ_bact"/>
    <property type="match status" value="1"/>
</dbReference>
<dbReference type="NCBIfam" id="NF008035">
    <property type="entry name" value="PRK10767.1"/>
    <property type="match status" value="1"/>
</dbReference>
<dbReference type="NCBIfam" id="NF010869">
    <property type="entry name" value="PRK14276.1"/>
    <property type="match status" value="1"/>
</dbReference>
<dbReference type="NCBIfam" id="NF010873">
    <property type="entry name" value="PRK14280.1"/>
    <property type="match status" value="1"/>
</dbReference>
<dbReference type="PANTHER" id="PTHR43096:SF48">
    <property type="entry name" value="CHAPERONE PROTEIN DNAJ"/>
    <property type="match status" value="1"/>
</dbReference>
<dbReference type="PANTHER" id="PTHR43096">
    <property type="entry name" value="DNAJ HOMOLOG 1, MITOCHONDRIAL-RELATED"/>
    <property type="match status" value="1"/>
</dbReference>
<dbReference type="Pfam" id="PF00226">
    <property type="entry name" value="DnaJ"/>
    <property type="match status" value="1"/>
</dbReference>
<dbReference type="Pfam" id="PF01556">
    <property type="entry name" value="DnaJ_C"/>
    <property type="match status" value="1"/>
</dbReference>
<dbReference type="Pfam" id="PF00684">
    <property type="entry name" value="DnaJ_CXXCXGXG"/>
    <property type="match status" value="1"/>
</dbReference>
<dbReference type="PRINTS" id="PR00625">
    <property type="entry name" value="JDOMAIN"/>
</dbReference>
<dbReference type="SMART" id="SM00271">
    <property type="entry name" value="DnaJ"/>
    <property type="match status" value="1"/>
</dbReference>
<dbReference type="SUPFAM" id="SSF46565">
    <property type="entry name" value="Chaperone J-domain"/>
    <property type="match status" value="1"/>
</dbReference>
<dbReference type="SUPFAM" id="SSF57938">
    <property type="entry name" value="DnaJ/Hsp40 cysteine-rich domain"/>
    <property type="match status" value="1"/>
</dbReference>
<dbReference type="SUPFAM" id="SSF49493">
    <property type="entry name" value="HSP40/DnaJ peptide-binding domain"/>
    <property type="match status" value="2"/>
</dbReference>
<dbReference type="PROSITE" id="PS00636">
    <property type="entry name" value="DNAJ_1"/>
    <property type="match status" value="1"/>
</dbReference>
<dbReference type="PROSITE" id="PS50076">
    <property type="entry name" value="DNAJ_2"/>
    <property type="match status" value="1"/>
</dbReference>
<dbReference type="PROSITE" id="PS51188">
    <property type="entry name" value="ZF_CR"/>
    <property type="match status" value="1"/>
</dbReference>
<proteinExistence type="inferred from homology"/>
<protein>
    <recommendedName>
        <fullName evidence="1">Chaperone protein DnaJ</fullName>
    </recommendedName>
</protein>
<organism>
    <name type="scientific">Bacillus licheniformis (strain ATCC 14580 / DSM 13 / JCM 2505 / CCUG 7422 / NBRC 12200 / NCIMB 9375 / NCTC 10341 / NRRL NRS-1264 / Gibson 46)</name>
    <dbReference type="NCBI Taxonomy" id="279010"/>
    <lineage>
        <taxon>Bacteria</taxon>
        <taxon>Bacillati</taxon>
        <taxon>Bacillota</taxon>
        <taxon>Bacilli</taxon>
        <taxon>Bacillales</taxon>
        <taxon>Bacillaceae</taxon>
        <taxon>Bacillus</taxon>
    </lineage>
</organism>
<accession>Q65H55</accession>
<accession>Q62SL2</accession>
<sequence>MSKRDYYEVLGVGKSASKDEIKKAYRKLSKKYHPDINKEAGAAEKFKEVKEAYETLSDDQKRAHYDQFGHTDPNQGFGGGGFGGGDFGGFGFDDIFSSIFGGGARRRDPNAPRQGADLQYTMTLSFEEAAFGKETTIEIPREETCETCSGSGAKPGTKPETCSHCGGSGQLNMEQSTPFGKVVNRRVCHYCNGTGKQIKHKCSTCGGTGKVKKRKKINVTIPAGVDDGQQLRVAGQGEPGINGGPSGDLFVVFRVQEHEFFERDGDDIYCEMPLTFAQAALGDEIEVPTLHGKVKLKVPAGTQTGTKFRLKGKGVANVRGYGQGDQHIVVRVVTPTNLTENQKNILREFAEVSGNMPDEQEMSFFDKVKRAFKGD</sequence>
<reference key="1">
    <citation type="journal article" date="2004" name="J. Mol. Microbiol. Biotechnol.">
        <title>The complete genome sequence of Bacillus licheniformis DSM13, an organism with great industrial potential.</title>
        <authorList>
            <person name="Veith B."/>
            <person name="Herzberg C."/>
            <person name="Steckel S."/>
            <person name="Feesche J."/>
            <person name="Maurer K.H."/>
            <person name="Ehrenreich P."/>
            <person name="Baeumer S."/>
            <person name="Henne A."/>
            <person name="Liesegang H."/>
            <person name="Merkl R."/>
            <person name="Ehrenreich A."/>
            <person name="Gottschalk G."/>
        </authorList>
    </citation>
    <scope>NUCLEOTIDE SEQUENCE [LARGE SCALE GENOMIC DNA]</scope>
    <source>
        <strain>ATCC 14580 / DSM 13 / JCM 2505 / CCUG 7422 / NBRC 12200 / NCIMB 9375 / NCTC 10341 / NRRL NRS-1264 / Gibson 46</strain>
    </source>
</reference>
<reference key="2">
    <citation type="journal article" date="2004" name="Genome Biol.">
        <title>Complete genome sequence of the industrial bacterium Bacillus licheniformis and comparisons with closely related Bacillus species.</title>
        <authorList>
            <person name="Rey M.W."/>
            <person name="Ramaiya P."/>
            <person name="Nelson B.A."/>
            <person name="Brody-Karpin S.D."/>
            <person name="Zaretsky E.J."/>
            <person name="Tang M."/>
            <person name="Lopez de Leon A."/>
            <person name="Xiang H."/>
            <person name="Gusti V."/>
            <person name="Clausen I.G."/>
            <person name="Olsen P.B."/>
            <person name="Rasmussen M.D."/>
            <person name="Andersen J.T."/>
            <person name="Joergensen P.L."/>
            <person name="Larsen T.S."/>
            <person name="Sorokin A."/>
            <person name="Bolotin A."/>
            <person name="Lapidus A."/>
            <person name="Galleron N."/>
            <person name="Ehrlich S.D."/>
            <person name="Berka R.M."/>
        </authorList>
    </citation>
    <scope>NUCLEOTIDE SEQUENCE [LARGE SCALE GENOMIC DNA]</scope>
    <source>
        <strain>ATCC 14580 / DSM 13 / JCM 2505 / CCUG 7422 / NBRC 12200 / NCIMB 9375 / NCTC 10341 / NRRL NRS-1264 / Gibson 46</strain>
    </source>
</reference>
<feature type="chain" id="PRO_0000070723" description="Chaperone protein DnaJ">
    <location>
        <begin position="1"/>
        <end position="375"/>
    </location>
</feature>
<feature type="domain" description="J" evidence="1">
    <location>
        <begin position="5"/>
        <end position="69"/>
    </location>
</feature>
<feature type="repeat" description="CXXCXGXG motif">
    <location>
        <begin position="145"/>
        <end position="152"/>
    </location>
</feature>
<feature type="repeat" description="CXXCXGXG motif">
    <location>
        <begin position="162"/>
        <end position="169"/>
    </location>
</feature>
<feature type="repeat" description="CXXCXGXG motif">
    <location>
        <begin position="188"/>
        <end position="195"/>
    </location>
</feature>
<feature type="repeat" description="CXXCXGXG motif">
    <location>
        <begin position="202"/>
        <end position="209"/>
    </location>
</feature>
<feature type="zinc finger region" description="CR-type" evidence="1">
    <location>
        <begin position="132"/>
        <end position="214"/>
    </location>
</feature>
<feature type="binding site" evidence="1">
    <location>
        <position position="145"/>
    </location>
    <ligand>
        <name>Zn(2+)</name>
        <dbReference type="ChEBI" id="CHEBI:29105"/>
        <label>1</label>
    </ligand>
</feature>
<feature type="binding site" evidence="1">
    <location>
        <position position="148"/>
    </location>
    <ligand>
        <name>Zn(2+)</name>
        <dbReference type="ChEBI" id="CHEBI:29105"/>
        <label>1</label>
    </ligand>
</feature>
<feature type="binding site" evidence="1">
    <location>
        <position position="162"/>
    </location>
    <ligand>
        <name>Zn(2+)</name>
        <dbReference type="ChEBI" id="CHEBI:29105"/>
        <label>2</label>
    </ligand>
</feature>
<feature type="binding site" evidence="1">
    <location>
        <position position="165"/>
    </location>
    <ligand>
        <name>Zn(2+)</name>
        <dbReference type="ChEBI" id="CHEBI:29105"/>
        <label>2</label>
    </ligand>
</feature>
<feature type="binding site" evidence="1">
    <location>
        <position position="188"/>
    </location>
    <ligand>
        <name>Zn(2+)</name>
        <dbReference type="ChEBI" id="CHEBI:29105"/>
        <label>2</label>
    </ligand>
</feature>
<feature type="binding site" evidence="1">
    <location>
        <position position="191"/>
    </location>
    <ligand>
        <name>Zn(2+)</name>
        <dbReference type="ChEBI" id="CHEBI:29105"/>
        <label>2</label>
    </ligand>
</feature>
<feature type="binding site" evidence="1">
    <location>
        <position position="202"/>
    </location>
    <ligand>
        <name>Zn(2+)</name>
        <dbReference type="ChEBI" id="CHEBI:29105"/>
        <label>1</label>
    </ligand>
</feature>
<feature type="binding site" evidence="1">
    <location>
        <position position="205"/>
    </location>
    <ligand>
        <name>Zn(2+)</name>
        <dbReference type="ChEBI" id="CHEBI:29105"/>
        <label>1</label>
    </ligand>
</feature>
<keyword id="KW-0143">Chaperone</keyword>
<keyword id="KW-0963">Cytoplasm</keyword>
<keyword id="KW-0235">DNA replication</keyword>
<keyword id="KW-0479">Metal-binding</keyword>
<keyword id="KW-1185">Reference proteome</keyword>
<keyword id="KW-0677">Repeat</keyword>
<keyword id="KW-0346">Stress response</keyword>
<keyword id="KW-0862">Zinc</keyword>
<keyword id="KW-0863">Zinc-finger</keyword>
<evidence type="ECO:0000255" key="1">
    <source>
        <dbReference type="HAMAP-Rule" id="MF_01152"/>
    </source>
</evidence>
<comment type="function">
    <text evidence="1">Participates actively in the response to hyperosmotic and heat shock by preventing the aggregation of stress-denatured proteins and by disaggregating proteins, also in an autonomous, DnaK-independent fashion. Unfolded proteins bind initially to DnaJ; upon interaction with the DnaJ-bound protein, DnaK hydrolyzes its bound ATP, resulting in the formation of a stable complex. GrpE releases ADP from DnaK; ATP binding to DnaK triggers the release of the substrate protein, thus completing the reaction cycle. Several rounds of ATP-dependent interactions between DnaJ, DnaK and GrpE are required for fully efficient folding. Also involved, together with DnaK and GrpE, in the DNA replication of plasmids through activation of initiation proteins.</text>
</comment>
<comment type="cofactor">
    <cofactor evidence="1">
        <name>Zn(2+)</name>
        <dbReference type="ChEBI" id="CHEBI:29105"/>
    </cofactor>
    <text evidence="1">Binds 2 Zn(2+) ions per monomer.</text>
</comment>
<comment type="subunit">
    <text evidence="1">Homodimer.</text>
</comment>
<comment type="subcellular location">
    <subcellularLocation>
        <location evidence="1">Cytoplasm</location>
    </subcellularLocation>
</comment>
<comment type="domain">
    <text evidence="1">The J domain is necessary and sufficient to stimulate DnaK ATPase activity. Zinc center 1 plays an important role in the autonomous, DnaK-independent chaperone activity of DnaJ. Zinc center 2 is essential for interaction with DnaK and for DnaJ activity.</text>
</comment>
<comment type="similarity">
    <text evidence="1">Belongs to the DnaJ family.</text>
</comment>
<name>DNAJ_BACLD</name>